<gene>
    <name evidence="1" type="primary">rplV</name>
    <name type="ordered locus">PsycPRwf_0431</name>
</gene>
<evidence type="ECO:0000255" key="1">
    <source>
        <dbReference type="HAMAP-Rule" id="MF_01331"/>
    </source>
</evidence>
<evidence type="ECO:0000305" key="2"/>
<feature type="chain" id="PRO_1000073281" description="Large ribosomal subunit protein uL22">
    <location>
        <begin position="1"/>
        <end position="109"/>
    </location>
</feature>
<proteinExistence type="inferred from homology"/>
<organism>
    <name type="scientific">Psychrobacter sp. (strain PRwf-1)</name>
    <dbReference type="NCBI Taxonomy" id="349106"/>
    <lineage>
        <taxon>Bacteria</taxon>
        <taxon>Pseudomonadati</taxon>
        <taxon>Pseudomonadota</taxon>
        <taxon>Gammaproteobacteria</taxon>
        <taxon>Moraxellales</taxon>
        <taxon>Moraxellaceae</taxon>
        <taxon>Psychrobacter</taxon>
    </lineage>
</organism>
<sequence>MEVTAKLRGAAISAQKVRLVADEVRGKSIERALDILAFSNKKGAVFVKKCLESAIANAEHNHGLDIDTLKVSTIYVDEGITLKRILPRAKGRADRISKRTCHITVKVGE</sequence>
<dbReference type="EMBL" id="CP000713">
    <property type="protein sequence ID" value="ABQ93386.1"/>
    <property type="molecule type" value="Genomic_DNA"/>
</dbReference>
<dbReference type="SMR" id="A5WCJ5"/>
<dbReference type="STRING" id="349106.PsycPRwf_0431"/>
<dbReference type="KEGG" id="prw:PsycPRwf_0431"/>
<dbReference type="eggNOG" id="COG0091">
    <property type="taxonomic scope" value="Bacteria"/>
</dbReference>
<dbReference type="HOGENOM" id="CLU_083987_3_3_6"/>
<dbReference type="GO" id="GO:0022625">
    <property type="term" value="C:cytosolic large ribosomal subunit"/>
    <property type="evidence" value="ECO:0007669"/>
    <property type="project" value="TreeGrafter"/>
</dbReference>
<dbReference type="GO" id="GO:0019843">
    <property type="term" value="F:rRNA binding"/>
    <property type="evidence" value="ECO:0007669"/>
    <property type="project" value="UniProtKB-UniRule"/>
</dbReference>
<dbReference type="GO" id="GO:0003735">
    <property type="term" value="F:structural constituent of ribosome"/>
    <property type="evidence" value="ECO:0007669"/>
    <property type="project" value="InterPro"/>
</dbReference>
<dbReference type="GO" id="GO:0006412">
    <property type="term" value="P:translation"/>
    <property type="evidence" value="ECO:0007669"/>
    <property type="project" value="UniProtKB-UniRule"/>
</dbReference>
<dbReference type="CDD" id="cd00336">
    <property type="entry name" value="Ribosomal_L22"/>
    <property type="match status" value="1"/>
</dbReference>
<dbReference type="FunFam" id="3.90.470.10:FF:000001">
    <property type="entry name" value="50S ribosomal protein L22"/>
    <property type="match status" value="1"/>
</dbReference>
<dbReference type="Gene3D" id="3.90.470.10">
    <property type="entry name" value="Ribosomal protein L22/L17"/>
    <property type="match status" value="1"/>
</dbReference>
<dbReference type="HAMAP" id="MF_01331_B">
    <property type="entry name" value="Ribosomal_uL22_B"/>
    <property type="match status" value="1"/>
</dbReference>
<dbReference type="InterPro" id="IPR001063">
    <property type="entry name" value="Ribosomal_uL22"/>
</dbReference>
<dbReference type="InterPro" id="IPR005727">
    <property type="entry name" value="Ribosomal_uL22_bac/chlpt-type"/>
</dbReference>
<dbReference type="InterPro" id="IPR047867">
    <property type="entry name" value="Ribosomal_uL22_bac/org-type"/>
</dbReference>
<dbReference type="InterPro" id="IPR018260">
    <property type="entry name" value="Ribosomal_uL22_CS"/>
</dbReference>
<dbReference type="InterPro" id="IPR036394">
    <property type="entry name" value="Ribosomal_uL22_sf"/>
</dbReference>
<dbReference type="NCBIfam" id="TIGR01044">
    <property type="entry name" value="rplV_bact"/>
    <property type="match status" value="1"/>
</dbReference>
<dbReference type="PANTHER" id="PTHR13501">
    <property type="entry name" value="CHLOROPLAST 50S RIBOSOMAL PROTEIN L22-RELATED"/>
    <property type="match status" value="1"/>
</dbReference>
<dbReference type="PANTHER" id="PTHR13501:SF8">
    <property type="entry name" value="LARGE RIBOSOMAL SUBUNIT PROTEIN UL22M"/>
    <property type="match status" value="1"/>
</dbReference>
<dbReference type="Pfam" id="PF00237">
    <property type="entry name" value="Ribosomal_L22"/>
    <property type="match status" value="1"/>
</dbReference>
<dbReference type="SUPFAM" id="SSF54843">
    <property type="entry name" value="Ribosomal protein L22"/>
    <property type="match status" value="1"/>
</dbReference>
<dbReference type="PROSITE" id="PS00464">
    <property type="entry name" value="RIBOSOMAL_L22"/>
    <property type="match status" value="1"/>
</dbReference>
<accession>A5WCJ5</accession>
<name>RL22_PSYWF</name>
<reference key="1">
    <citation type="submission" date="2007-05" db="EMBL/GenBank/DDBJ databases">
        <title>Complete sequence of chromosome of Psychrobacter sp. PRwf-1.</title>
        <authorList>
            <consortium name="US DOE Joint Genome Institute"/>
            <person name="Copeland A."/>
            <person name="Lucas S."/>
            <person name="Lapidus A."/>
            <person name="Barry K."/>
            <person name="Detter J.C."/>
            <person name="Glavina del Rio T."/>
            <person name="Hammon N."/>
            <person name="Israni S."/>
            <person name="Dalin E."/>
            <person name="Tice H."/>
            <person name="Pitluck S."/>
            <person name="Chain P."/>
            <person name="Malfatti S."/>
            <person name="Shin M."/>
            <person name="Vergez L."/>
            <person name="Schmutz J."/>
            <person name="Larimer F."/>
            <person name="Land M."/>
            <person name="Hauser L."/>
            <person name="Kyrpides N."/>
            <person name="Kim E."/>
            <person name="Tiedje J."/>
            <person name="Richardson P."/>
        </authorList>
    </citation>
    <scope>NUCLEOTIDE SEQUENCE [LARGE SCALE GENOMIC DNA]</scope>
    <source>
        <strain>PRwf-1</strain>
    </source>
</reference>
<keyword id="KW-0687">Ribonucleoprotein</keyword>
<keyword id="KW-0689">Ribosomal protein</keyword>
<keyword id="KW-0694">RNA-binding</keyword>
<keyword id="KW-0699">rRNA-binding</keyword>
<comment type="function">
    <text evidence="1">This protein binds specifically to 23S rRNA; its binding is stimulated by other ribosomal proteins, e.g. L4, L17, and L20. It is important during the early stages of 50S assembly. It makes multiple contacts with different domains of the 23S rRNA in the assembled 50S subunit and ribosome (By similarity).</text>
</comment>
<comment type="function">
    <text evidence="1">The globular domain of the protein is located near the polypeptide exit tunnel on the outside of the subunit, while an extended beta-hairpin is found that lines the wall of the exit tunnel in the center of the 70S ribosome.</text>
</comment>
<comment type="subunit">
    <text evidence="1">Part of the 50S ribosomal subunit.</text>
</comment>
<comment type="similarity">
    <text evidence="1">Belongs to the universal ribosomal protein uL22 family.</text>
</comment>
<protein>
    <recommendedName>
        <fullName evidence="1">Large ribosomal subunit protein uL22</fullName>
    </recommendedName>
    <alternativeName>
        <fullName evidence="2">50S ribosomal protein L22</fullName>
    </alternativeName>
</protein>